<reference key="1">
    <citation type="journal article" date="2003" name="Plant J.">
        <title>OsHAP3 genes regulate chloroplast biogenesis in rice.</title>
        <authorList>
            <person name="Miyoshi K."/>
            <person name="Ito Y."/>
            <person name="Serizawa A."/>
            <person name="Kurata N."/>
        </authorList>
    </citation>
    <scope>NUCLEOTIDE SEQUENCE [MRNA]</scope>
    <scope>FUNCTION</scope>
    <scope>TISSUE SPECIFICITY</scope>
    <source>
        <strain>cv. Nipponbare</strain>
    </source>
</reference>
<reference key="2">
    <citation type="journal article" date="2002" name="Nature">
        <title>The genome sequence and structure of rice chromosome 1.</title>
        <authorList>
            <person name="Sasaki T."/>
            <person name="Matsumoto T."/>
            <person name="Yamamoto K."/>
            <person name="Sakata K."/>
            <person name="Baba T."/>
            <person name="Katayose Y."/>
            <person name="Wu J."/>
            <person name="Niimura Y."/>
            <person name="Cheng Z."/>
            <person name="Nagamura Y."/>
            <person name="Antonio B.A."/>
            <person name="Kanamori H."/>
            <person name="Hosokawa S."/>
            <person name="Masukawa M."/>
            <person name="Arikawa K."/>
            <person name="Chiden Y."/>
            <person name="Hayashi M."/>
            <person name="Okamoto M."/>
            <person name="Ando T."/>
            <person name="Aoki H."/>
            <person name="Arita K."/>
            <person name="Hamada M."/>
            <person name="Harada C."/>
            <person name="Hijishita S."/>
            <person name="Honda M."/>
            <person name="Ichikawa Y."/>
            <person name="Idonuma A."/>
            <person name="Iijima M."/>
            <person name="Ikeda M."/>
            <person name="Ikeno M."/>
            <person name="Ito S."/>
            <person name="Ito T."/>
            <person name="Ito Y."/>
            <person name="Ito Y."/>
            <person name="Iwabuchi A."/>
            <person name="Kamiya K."/>
            <person name="Karasawa W."/>
            <person name="Katagiri S."/>
            <person name="Kikuta A."/>
            <person name="Kobayashi N."/>
            <person name="Kono I."/>
            <person name="Machita K."/>
            <person name="Maehara T."/>
            <person name="Mizuno H."/>
            <person name="Mizubayashi T."/>
            <person name="Mukai Y."/>
            <person name="Nagasaki H."/>
            <person name="Nakashima M."/>
            <person name="Nakama Y."/>
            <person name="Nakamichi Y."/>
            <person name="Nakamura M."/>
            <person name="Namiki N."/>
            <person name="Negishi M."/>
            <person name="Ohta I."/>
            <person name="Ono N."/>
            <person name="Saji S."/>
            <person name="Sakai K."/>
            <person name="Shibata M."/>
            <person name="Shimokawa T."/>
            <person name="Shomura A."/>
            <person name="Song J."/>
            <person name="Takazaki Y."/>
            <person name="Terasawa K."/>
            <person name="Tsuji K."/>
            <person name="Waki K."/>
            <person name="Yamagata H."/>
            <person name="Yamane H."/>
            <person name="Yoshiki S."/>
            <person name="Yoshihara R."/>
            <person name="Yukawa K."/>
            <person name="Zhong H."/>
            <person name="Iwama H."/>
            <person name="Endo T."/>
            <person name="Ito H."/>
            <person name="Hahn J.H."/>
            <person name="Kim H.-I."/>
            <person name="Eun M.-Y."/>
            <person name="Yano M."/>
            <person name="Jiang J."/>
            <person name="Gojobori T."/>
        </authorList>
    </citation>
    <scope>NUCLEOTIDE SEQUENCE [LARGE SCALE GENOMIC DNA]</scope>
    <source>
        <strain>cv. Nipponbare</strain>
    </source>
</reference>
<reference key="3">
    <citation type="journal article" date="2005" name="Nature">
        <title>The map-based sequence of the rice genome.</title>
        <authorList>
            <consortium name="International rice genome sequencing project (IRGSP)"/>
        </authorList>
    </citation>
    <scope>NUCLEOTIDE SEQUENCE [LARGE SCALE GENOMIC DNA]</scope>
    <source>
        <strain>cv. Nipponbare</strain>
    </source>
</reference>
<reference key="4">
    <citation type="journal article" date="2008" name="Nucleic Acids Res.">
        <title>The rice annotation project database (RAP-DB): 2008 update.</title>
        <authorList>
            <consortium name="The rice annotation project (RAP)"/>
        </authorList>
    </citation>
    <scope>GENOME REANNOTATION</scope>
    <source>
        <strain>cv. Nipponbare</strain>
    </source>
</reference>
<reference key="5">
    <citation type="journal article" date="2013" name="Rice">
        <title>Improvement of the Oryza sativa Nipponbare reference genome using next generation sequence and optical map data.</title>
        <authorList>
            <person name="Kawahara Y."/>
            <person name="de la Bastide M."/>
            <person name="Hamilton J.P."/>
            <person name="Kanamori H."/>
            <person name="McCombie W.R."/>
            <person name="Ouyang S."/>
            <person name="Schwartz D.C."/>
            <person name="Tanaka T."/>
            <person name="Wu J."/>
            <person name="Zhou S."/>
            <person name="Childs K.L."/>
            <person name="Davidson R.M."/>
            <person name="Lin H."/>
            <person name="Quesada-Ocampo L."/>
            <person name="Vaillancourt B."/>
            <person name="Sakai H."/>
            <person name="Lee S.S."/>
            <person name="Kim J."/>
            <person name="Numa H."/>
            <person name="Itoh T."/>
            <person name="Buell C.R."/>
            <person name="Matsumoto T."/>
        </authorList>
    </citation>
    <scope>GENOME REANNOTATION</scope>
    <source>
        <strain>cv. Nipponbare</strain>
    </source>
</reference>
<reference key="6">
    <citation type="journal article" date="2008" name="Mol. Genet. Genomics">
        <title>Identification, characterization and interaction of HAP family genes in rice.</title>
        <authorList>
            <person name="Thirumurugan T."/>
            <person name="Ito Y."/>
            <person name="Kubo T."/>
            <person name="Serizawa A."/>
            <person name="Kurata N."/>
        </authorList>
    </citation>
    <scope>INTERACTION WITH NFYC4 AND NFYC6</scope>
    <source>
        <strain>cv. Nipponbare</strain>
    </source>
</reference>
<organism>
    <name type="scientific">Oryza sativa subsp. japonica</name>
    <name type="common">Rice</name>
    <dbReference type="NCBI Taxonomy" id="39947"/>
    <lineage>
        <taxon>Eukaryota</taxon>
        <taxon>Viridiplantae</taxon>
        <taxon>Streptophyta</taxon>
        <taxon>Embryophyta</taxon>
        <taxon>Tracheophyta</taxon>
        <taxon>Spermatophyta</taxon>
        <taxon>Magnoliopsida</taxon>
        <taxon>Liliopsida</taxon>
        <taxon>Poales</taxon>
        <taxon>Poaceae</taxon>
        <taxon>BOP clade</taxon>
        <taxon>Oryzoideae</taxon>
        <taxon>Oryzeae</taxon>
        <taxon>Oryzinae</taxon>
        <taxon>Oryza</taxon>
        <taxon>Oryza sativa</taxon>
    </lineage>
</organism>
<name>NFYB2_ORYSJ</name>
<feature type="chain" id="PRO_0000204627" description="Nuclear transcription factor Y subunit B-2">
    <location>
        <begin position="1"/>
        <end position="178"/>
    </location>
</feature>
<feature type="DNA-binding region" evidence="1">
    <location>
        <begin position="39"/>
        <end position="45"/>
    </location>
</feature>
<feature type="region of interest" description="Subunit association domain (SAD)" evidence="1">
    <location>
        <begin position="66"/>
        <end position="77"/>
    </location>
</feature>
<feature type="region of interest" description="Disordered" evidence="2">
    <location>
        <begin position="131"/>
        <end position="156"/>
    </location>
</feature>
<feature type="sequence conflict" description="In Ref. 1; BAC76331." evidence="5" ref="1">
    <original>VI</original>
    <variation>ME</variation>
    <location>
        <begin position="124"/>
        <end position="125"/>
    </location>
</feature>
<protein>
    <recommendedName>
        <fullName>Nuclear transcription factor Y subunit B-2</fullName>
    </recommendedName>
    <alternativeName>
        <fullName>OsNF-YB-2</fullName>
    </alternativeName>
    <alternativeName>
        <fullName>Transcriptional activator HAP3A</fullName>
    </alternativeName>
</protein>
<sequence length="178" mass="19152">MMMMDLGFLEGGAGMADAGHDESGSPPRSGGVREQDRFLPIANISRIMKKAVPANGKIAKDAKETLQECVSEFISFVTSEASDKCQKEKRKTINGEDLLFAMGTLGFEEYVDPLKIYLHKYREVIGDSKLSSKAGDGSVKKDTIGPHSGASSSSAQGMVGAYTQGMGYMQPQYHNGDT</sequence>
<comment type="function">
    <text evidence="3">Component of the NF-Y/HAP transcription factor complex. The NF-Y complex stimulates the transcription of various genes by recognizing and binding to a CCAAT motif in promoters. May regulate the expression of photosynthetic genes, and may be involved in chloroplast and amyloplast development.</text>
</comment>
<comment type="subunit">
    <text evidence="1 4">Heterotrimeric transcription factor composed of three components, NF-YA, NF-YB and NF-YC. NF-YB and NF-YC must interact and dimerize for NF-YA association and DNA binding (By similarity). Interacts with NFYC4 and NFYC6 (PubMed:18193457).</text>
</comment>
<comment type="subcellular location">
    <subcellularLocation>
        <location evidence="5">Nucleus</location>
    </subcellularLocation>
</comment>
<comment type="tissue specificity">
    <text evidence="3">Ubiquitous.</text>
</comment>
<comment type="similarity">
    <text evidence="5">Belongs to the NFYB/HAP3 subunit family.</text>
</comment>
<comment type="sequence caution" evidence="5">
    <conflict type="erroneous gene model prediction">
        <sequence resource="EMBL-CDS" id="BAH91366"/>
    </conflict>
</comment>
<evidence type="ECO:0000250" key="1"/>
<evidence type="ECO:0000256" key="2">
    <source>
        <dbReference type="SAM" id="MobiDB-lite"/>
    </source>
</evidence>
<evidence type="ECO:0000269" key="3">
    <source>
    </source>
</evidence>
<evidence type="ECO:0000269" key="4">
    <source>
    </source>
</evidence>
<evidence type="ECO:0000305" key="5"/>
<proteinExistence type="evidence at protein level"/>
<dbReference type="EMBL" id="AB095438">
    <property type="protein sequence ID" value="BAC76331.1"/>
    <property type="molecule type" value="mRNA"/>
</dbReference>
<dbReference type="EMBL" id="AP003271">
    <property type="protein sequence ID" value="BAD73383.1"/>
    <property type="molecule type" value="Genomic_DNA"/>
</dbReference>
<dbReference type="EMBL" id="AP004366">
    <property type="protein sequence ID" value="BAD73788.1"/>
    <property type="molecule type" value="Genomic_DNA"/>
</dbReference>
<dbReference type="EMBL" id="AP008207">
    <property type="protein sequence ID" value="BAH91366.1"/>
    <property type="status" value="ALT_SEQ"/>
    <property type="molecule type" value="Genomic_DNA"/>
</dbReference>
<dbReference type="EMBL" id="AP014957">
    <property type="status" value="NOT_ANNOTATED_CDS"/>
    <property type="molecule type" value="Genomic_DNA"/>
</dbReference>
<dbReference type="SMR" id="Q5QMG3"/>
<dbReference type="FunCoup" id="Q5QMG3">
    <property type="interactions" value="977"/>
</dbReference>
<dbReference type="STRING" id="39947.Q5QMG3"/>
<dbReference type="PaxDb" id="39947-Q5QMG3"/>
<dbReference type="KEGG" id="dosa:Os01g0834400"/>
<dbReference type="eggNOG" id="KOG0869">
    <property type="taxonomic scope" value="Eukaryota"/>
</dbReference>
<dbReference type="HOGENOM" id="CLU_066247_12_3_1"/>
<dbReference type="InParanoid" id="Q5QMG3"/>
<dbReference type="Proteomes" id="UP000000763">
    <property type="component" value="Chromosome 1"/>
</dbReference>
<dbReference type="Proteomes" id="UP000059680">
    <property type="component" value="Chromosome 1"/>
</dbReference>
<dbReference type="GO" id="GO:0016602">
    <property type="term" value="C:CCAAT-binding factor complex"/>
    <property type="evidence" value="ECO:0000318"/>
    <property type="project" value="GO_Central"/>
</dbReference>
<dbReference type="GO" id="GO:0001228">
    <property type="term" value="F:DNA-binding transcription activator activity, RNA polymerase II-specific"/>
    <property type="evidence" value="ECO:0007669"/>
    <property type="project" value="InterPro"/>
</dbReference>
<dbReference type="GO" id="GO:0000981">
    <property type="term" value="F:DNA-binding transcription factor activity, RNA polymerase II-specific"/>
    <property type="evidence" value="ECO:0000318"/>
    <property type="project" value="GO_Central"/>
</dbReference>
<dbReference type="GO" id="GO:0046982">
    <property type="term" value="F:protein heterodimerization activity"/>
    <property type="evidence" value="ECO:0007669"/>
    <property type="project" value="InterPro"/>
</dbReference>
<dbReference type="GO" id="GO:0043565">
    <property type="term" value="F:sequence-specific DNA binding"/>
    <property type="evidence" value="ECO:0007669"/>
    <property type="project" value="InterPro"/>
</dbReference>
<dbReference type="GO" id="GO:0006357">
    <property type="term" value="P:regulation of transcription by RNA polymerase II"/>
    <property type="evidence" value="ECO:0000318"/>
    <property type="project" value="GO_Central"/>
</dbReference>
<dbReference type="CDD" id="cd22907">
    <property type="entry name" value="HFD_NFYB"/>
    <property type="match status" value="1"/>
</dbReference>
<dbReference type="FunFam" id="1.10.20.10:FF:000035">
    <property type="entry name" value="Nuclear transcription factor Y subunit B-3"/>
    <property type="match status" value="1"/>
</dbReference>
<dbReference type="Gene3D" id="1.10.20.10">
    <property type="entry name" value="Histone, subunit A"/>
    <property type="match status" value="1"/>
</dbReference>
<dbReference type="InterPro" id="IPR003958">
    <property type="entry name" value="CBFA_NFYB_domain"/>
</dbReference>
<dbReference type="InterPro" id="IPR009072">
    <property type="entry name" value="Histone-fold"/>
</dbReference>
<dbReference type="InterPro" id="IPR027113">
    <property type="entry name" value="Transc_fact_NFYB/HAP3"/>
</dbReference>
<dbReference type="InterPro" id="IPR003956">
    <property type="entry name" value="Transcrpt_fac_NFYB/HAP3_CS"/>
</dbReference>
<dbReference type="PANTHER" id="PTHR11064">
    <property type="entry name" value="CCAAT-BINDING TRANSCRIPTION FACTOR-RELATED"/>
    <property type="match status" value="1"/>
</dbReference>
<dbReference type="PANTHER" id="PTHR11064:SF171">
    <property type="entry name" value="NUCLEAR TRANSCRIPTION FACTOR Y SUBUNIT B-2"/>
    <property type="match status" value="1"/>
</dbReference>
<dbReference type="Pfam" id="PF00808">
    <property type="entry name" value="CBFD_NFYB_HMF"/>
    <property type="match status" value="1"/>
</dbReference>
<dbReference type="PRINTS" id="PR00615">
    <property type="entry name" value="CCAATSUBUNTA"/>
</dbReference>
<dbReference type="SUPFAM" id="SSF47113">
    <property type="entry name" value="Histone-fold"/>
    <property type="match status" value="1"/>
</dbReference>
<dbReference type="PROSITE" id="PS00685">
    <property type="entry name" value="NFYB_HAP3"/>
    <property type="match status" value="1"/>
</dbReference>
<gene>
    <name type="primary">NFYB2</name>
    <name type="synonym">HAP3A</name>
    <name type="ordered locus">Os01g0834400</name>
    <name type="ordered locus">LOC_Os01g61810</name>
    <name type="ORF">P0460C04.37</name>
    <name type="ORF">P0506B12.4</name>
</gene>
<accession>Q5QMG3</accession>
<accession>C7IWB3</accession>
<accession>Q84NF1</accession>
<keyword id="KW-0010">Activator</keyword>
<keyword id="KW-0238">DNA-binding</keyword>
<keyword id="KW-0539">Nucleus</keyword>
<keyword id="KW-1185">Reference proteome</keyword>
<keyword id="KW-0804">Transcription</keyword>
<keyword id="KW-0805">Transcription regulation</keyword>